<feature type="chain" id="PRO_0000079596" description="Pre-mRNA-splicing factor CWC25">
    <location>
        <begin position="1"/>
        <end position="179"/>
    </location>
</feature>
<feature type="region of interest" description="Disordered" evidence="2">
    <location>
        <begin position="99"/>
        <end position="179"/>
    </location>
</feature>
<feature type="coiled-coil region" evidence="1">
    <location>
        <begin position="25"/>
        <end position="57"/>
    </location>
</feature>
<feature type="compositionally biased region" description="Low complexity" evidence="2">
    <location>
        <begin position="114"/>
        <end position="129"/>
    </location>
</feature>
<feature type="modified residue" description="Phosphoserine" evidence="8">
    <location>
        <position position="129"/>
    </location>
</feature>
<feature type="helix" evidence="9">
    <location>
        <begin position="6"/>
        <end position="9"/>
    </location>
</feature>
<feature type="strand" evidence="9">
    <location>
        <begin position="10"/>
        <end position="12"/>
    </location>
</feature>
<feature type="helix" evidence="9">
    <location>
        <begin position="19"/>
        <end position="41"/>
    </location>
</feature>
<name>CWC25_YEAST</name>
<protein>
    <recommendedName>
        <fullName>Pre-mRNA-splicing factor CWC25</fullName>
    </recommendedName>
    <alternativeName>
        <fullName>Complexed with CEF1 protein 25</fullName>
    </alternativeName>
</protein>
<organism>
    <name type="scientific">Saccharomyces cerevisiae (strain ATCC 204508 / S288c)</name>
    <name type="common">Baker's yeast</name>
    <dbReference type="NCBI Taxonomy" id="559292"/>
    <lineage>
        <taxon>Eukaryota</taxon>
        <taxon>Fungi</taxon>
        <taxon>Dikarya</taxon>
        <taxon>Ascomycota</taxon>
        <taxon>Saccharomycotina</taxon>
        <taxon>Saccharomycetes</taxon>
        <taxon>Saccharomycetales</taxon>
        <taxon>Saccharomycetaceae</taxon>
        <taxon>Saccharomyces</taxon>
    </lineage>
</organism>
<accession>P53854</accession>
<accession>D6W0U8</accession>
<reference key="1">
    <citation type="journal article" date="1997" name="Yeast">
        <title>Sequence analysis of the 33 kb long region between ORC5 and SUI1 from the left arm of chromosome XIV from Saccharomyces cerevisiae.</title>
        <authorList>
            <person name="Sen-Gupta M."/>
            <person name="Gueldener U."/>
            <person name="Beinhauer J.D."/>
            <person name="Fiedler T.A."/>
            <person name="Hegemann J.H."/>
        </authorList>
    </citation>
    <scope>NUCLEOTIDE SEQUENCE [LARGE SCALE GENOMIC DNA]</scope>
    <source>
        <strain>ATCC 96604 / S288c / FY1679</strain>
    </source>
</reference>
<reference key="2">
    <citation type="journal article" date="2014" name="G3 (Bethesda)">
        <title>The reference genome sequence of Saccharomyces cerevisiae: Then and now.</title>
        <authorList>
            <person name="Engel S.R."/>
            <person name="Dietrich F.S."/>
            <person name="Fisk D.G."/>
            <person name="Binkley G."/>
            <person name="Balakrishnan R."/>
            <person name="Costanzo M.C."/>
            <person name="Dwight S.S."/>
            <person name="Hitz B.C."/>
            <person name="Karra K."/>
            <person name="Nash R.S."/>
            <person name="Weng S."/>
            <person name="Wong E.D."/>
            <person name="Lloyd P."/>
            <person name="Skrzypek M.S."/>
            <person name="Miyasato S.R."/>
            <person name="Simison M."/>
            <person name="Cherry J.M."/>
        </authorList>
    </citation>
    <scope>GENOME REANNOTATION</scope>
    <source>
        <strain>ATCC 204508 / S288c</strain>
    </source>
</reference>
<reference key="3">
    <citation type="journal article" date="1997" name="Nature">
        <title>The nucleotide sequence of Saccharomyces cerevisiae chromosome XIV and its evolutionary implications.</title>
        <authorList>
            <person name="Philippsen P."/>
            <person name="Kleine K."/>
            <person name="Poehlmann R."/>
            <person name="Duesterhoeft A."/>
            <person name="Hamberg K."/>
            <person name="Hegemann J.H."/>
            <person name="Obermaier B."/>
            <person name="Urrestarazu L.A."/>
            <person name="Aert R."/>
            <person name="Albermann K."/>
            <person name="Altmann R."/>
            <person name="Andre B."/>
            <person name="Baladron V."/>
            <person name="Ballesta J.P.G."/>
            <person name="Becam A.-M."/>
            <person name="Beinhauer J.D."/>
            <person name="Boskovic J."/>
            <person name="Buitrago M.J."/>
            <person name="Bussereau F."/>
            <person name="Coster F."/>
            <person name="Crouzet M."/>
            <person name="D'Angelo M."/>
            <person name="Dal Pero F."/>
            <person name="De Antoni A."/>
            <person name="del Rey F."/>
            <person name="Doignon F."/>
            <person name="Domdey H."/>
            <person name="Dubois E."/>
            <person name="Fiedler T.A."/>
            <person name="Fleig U."/>
            <person name="Floeth M."/>
            <person name="Fritz C."/>
            <person name="Gaillardin C."/>
            <person name="Garcia-Cantalejo J.M."/>
            <person name="Glansdorff N."/>
            <person name="Goffeau A."/>
            <person name="Gueldener U."/>
            <person name="Herbert C.J."/>
            <person name="Heumann K."/>
            <person name="Heuss-Neitzel D."/>
            <person name="Hilbert H."/>
            <person name="Hinni K."/>
            <person name="Iraqui Houssaini I."/>
            <person name="Jacquet M."/>
            <person name="Jimenez A."/>
            <person name="Jonniaux J.-L."/>
            <person name="Karpfinger-Hartl L."/>
            <person name="Lanfranchi G."/>
            <person name="Lepingle A."/>
            <person name="Levesque H."/>
            <person name="Lyck R."/>
            <person name="Maftahi M."/>
            <person name="Mallet L."/>
            <person name="Maurer C.T.C."/>
            <person name="Messenguy F."/>
            <person name="Mewes H.-W."/>
            <person name="Moestl D."/>
            <person name="Nasr F."/>
            <person name="Nicaud J.-M."/>
            <person name="Niedenthal R.K."/>
            <person name="Pandolfo D."/>
            <person name="Pierard A."/>
            <person name="Piravandi E."/>
            <person name="Planta R.J."/>
            <person name="Pohl T.M."/>
            <person name="Purnelle B."/>
            <person name="Rebischung C."/>
            <person name="Remacha M.A."/>
            <person name="Revuelta J.L."/>
            <person name="Rinke M."/>
            <person name="Saiz J.E."/>
            <person name="Sartorello F."/>
            <person name="Scherens B."/>
            <person name="Sen-Gupta M."/>
            <person name="Soler-Mira A."/>
            <person name="Urbanus J.H.M."/>
            <person name="Valle G."/>
            <person name="Van Dyck L."/>
            <person name="Verhasselt P."/>
            <person name="Vierendeels F."/>
            <person name="Vissers S."/>
            <person name="Voet M."/>
            <person name="Volckaert G."/>
            <person name="Wach A."/>
            <person name="Wambutt R."/>
            <person name="Wedler H."/>
            <person name="Zollner A."/>
            <person name="Hani J."/>
        </authorList>
    </citation>
    <scope>NUCLEOTIDE SEQUENCE [LARGE SCALE GENOMIC DNA]</scope>
    <source>
        <strain>ATCC 204508 / S288c</strain>
    </source>
</reference>
<reference key="4">
    <citation type="journal article" date="2007" name="Genome Res.">
        <title>Approaching a complete repository of sequence-verified protein-encoding clones for Saccharomyces cerevisiae.</title>
        <authorList>
            <person name="Hu Y."/>
            <person name="Rolfs A."/>
            <person name="Bhullar B."/>
            <person name="Murthy T.V.S."/>
            <person name="Zhu C."/>
            <person name="Berger M.F."/>
            <person name="Camargo A.A."/>
            <person name="Kelley F."/>
            <person name="McCarron S."/>
            <person name="Jepson D."/>
            <person name="Richardson A."/>
            <person name="Raphael J."/>
            <person name="Moreira D."/>
            <person name="Taycher E."/>
            <person name="Zuo D."/>
            <person name="Mohr S."/>
            <person name="Kane M.F."/>
            <person name="Williamson J."/>
            <person name="Simpson A.J.G."/>
            <person name="Bulyk M.L."/>
            <person name="Harlow E."/>
            <person name="Marsischky G."/>
            <person name="Kolodner R.D."/>
            <person name="LaBaer J."/>
        </authorList>
    </citation>
    <scope>NUCLEOTIDE SEQUENCE [GENOMIC DNA]</scope>
    <source>
        <strain>ATCC 204508 / S288c</strain>
    </source>
</reference>
<reference key="5">
    <citation type="journal article" date="2002" name="Mol. Cell. Biol.">
        <title>Proteomics analysis reveals stable multiprotein complexes in both fission and budding yeasts containing Myb-related Cdc5p/Cef1p, novel pre-mRNA splicing factors, and snRNAs.</title>
        <authorList>
            <person name="Ohi M.D."/>
            <person name="Link A.J."/>
            <person name="Ren L."/>
            <person name="Jennings J.L."/>
            <person name="McDonald W.H."/>
            <person name="Gould K.L."/>
        </authorList>
    </citation>
    <scope>IDENTIFICATION IN THE CWC COMPLEX</scope>
    <scope>IDENTIFICATION BY MASS SPECTROMETRY</scope>
</reference>
<reference key="6">
    <citation type="journal article" date="2003" name="Mol. Cell">
        <title>Assigning function to yeast proteins by integration of technologies.</title>
        <authorList>
            <person name="Hazbun T.R."/>
            <person name="Malmstroem L."/>
            <person name="Anderson S."/>
            <person name="Graczyk B.J."/>
            <person name="Fox B."/>
            <person name="Riffle M."/>
            <person name="Sundin B.A."/>
            <person name="Aranda J.D."/>
            <person name="McDonald W.H."/>
            <person name="Chiu C.-H."/>
            <person name="Snydsman B.E."/>
            <person name="Bradley P."/>
            <person name="Muller E.G.D."/>
            <person name="Fields S."/>
            <person name="Baker D."/>
            <person name="Yates J.R. III"/>
            <person name="Davis T.N."/>
        </authorList>
    </citation>
    <scope>FUNCTION</scope>
    <scope>IDENTIFICATION BY MASS SPECTROMETRY</scope>
    <scope>SUBCELLULAR LOCATION [LARGE SCALE ANALYSIS]</scope>
</reference>
<reference key="7">
    <citation type="journal article" date="2003" name="Nature">
        <title>Global analysis of protein localization in budding yeast.</title>
        <authorList>
            <person name="Huh W.-K."/>
            <person name="Falvo J.V."/>
            <person name="Gerke L.C."/>
            <person name="Carroll A.S."/>
            <person name="Howson R.W."/>
            <person name="Weissman J.S."/>
            <person name="O'Shea E.K."/>
        </authorList>
    </citation>
    <scope>SUBCELLULAR LOCATION [LARGE SCALE ANALYSIS]</scope>
</reference>
<reference key="8">
    <citation type="journal article" date="2003" name="Nature">
        <title>Global analysis of protein expression in yeast.</title>
        <authorList>
            <person name="Ghaemmaghami S."/>
            <person name="Huh W.-K."/>
            <person name="Bower K."/>
            <person name="Howson R.W."/>
            <person name="Belle A."/>
            <person name="Dephoure N."/>
            <person name="O'Shea E.K."/>
            <person name="Weissman J.S."/>
        </authorList>
    </citation>
    <scope>LEVEL OF PROTEIN EXPRESSION [LARGE SCALE ANALYSIS]</scope>
</reference>
<reference key="9">
    <citation type="journal article" date="2009" name="Science">
        <title>Global analysis of Cdk1 substrate phosphorylation sites provides insights into evolution.</title>
        <authorList>
            <person name="Holt L.J."/>
            <person name="Tuch B.B."/>
            <person name="Villen J."/>
            <person name="Johnson A.D."/>
            <person name="Gygi S.P."/>
            <person name="Morgan D.O."/>
        </authorList>
    </citation>
    <scope>PHOSPHORYLATION [LARGE SCALE ANALYSIS] AT SER-129</scope>
    <scope>IDENTIFICATION BY MASS SPECTROMETRY [LARGE SCALE ANALYSIS]</scope>
</reference>
<keyword id="KW-0002">3D-structure</keyword>
<keyword id="KW-0175">Coiled coil</keyword>
<keyword id="KW-0507">mRNA processing</keyword>
<keyword id="KW-0508">mRNA splicing</keyword>
<keyword id="KW-0539">Nucleus</keyword>
<keyword id="KW-0597">Phosphoprotein</keyword>
<keyword id="KW-1185">Reference proteome</keyword>
<keyword id="KW-0747">Spliceosome</keyword>
<evidence type="ECO:0000255" key="1"/>
<evidence type="ECO:0000256" key="2">
    <source>
        <dbReference type="SAM" id="MobiDB-lite"/>
    </source>
</evidence>
<evidence type="ECO:0000269" key="3">
    <source>
    </source>
</evidence>
<evidence type="ECO:0000269" key="4">
    <source>
    </source>
</evidence>
<evidence type="ECO:0000269" key="5">
    <source>
    </source>
</evidence>
<evidence type="ECO:0000269" key="6">
    <source>
    </source>
</evidence>
<evidence type="ECO:0000305" key="7"/>
<evidence type="ECO:0007744" key="8">
    <source>
    </source>
</evidence>
<evidence type="ECO:0007829" key="9">
    <source>
        <dbReference type="PDB" id="5GMK"/>
    </source>
</evidence>
<gene>
    <name type="primary">CWC25</name>
    <name type="ordered locus">YNL245C</name>
    <name type="ORF">N0901</name>
</gene>
<proteinExistence type="evidence at protein level"/>
<comment type="function">
    <text>Involved in pre-mRNA splicing.</text>
</comment>
<comment type="subunit">
    <text evidence="3 6">Belongs to the CWC complex (or CEF1-associated complex), a spliceosome sub-complex reminiscent of a late-stage spliceosome composed of the U2, U5 and U6 snRNAs and at least BUD13, BUD31, BRR2, CDC40, CEF1, CLF1, CUS1, CWC2, CWC15, CWC21, CWC22, CWC23, CWC24, CWC25, CWC27, ECM2, HSH155, IST3, ISY1, LEA1, MSL1, NTC20, PRP8, PRP9, PRP11, PRP19, PRP21, PRP22, PRP45, PRP46, SLU7, SMB1, SMD1, SMD2, SMD3, SMX2, SMX3, SNT309, SNU114, SPP2, SYF1, SYF2, RSE1 and YJU2.</text>
</comment>
<comment type="subcellular location">
    <subcellularLocation>
        <location evidence="4 6">Nucleus</location>
    </subcellularLocation>
</comment>
<comment type="miscellaneous">
    <text evidence="5">Present with 861 molecules/cell in log phase SD medium.</text>
</comment>
<comment type="similarity">
    <text evidence="7">Belongs to the CWC25 family.</text>
</comment>
<sequence>MGSGDLNLLKSWNPKLMKNRKKVWETEQDLITEQQKLNTRLKEIEKERELNELLNESSKDKPETLKNDLALKKSGLEWMYQDAKLSDEKEDYLLGKKKLDSSILNQPATPPVRAATTISASGAATSISSQKKKSKLLKDDPMSKFKVTKQQRRTPDSTKKRAMSQRGKPLSKPAPDLDY</sequence>
<dbReference type="EMBL" id="X96722">
    <property type="protein sequence ID" value="CAA65498.1"/>
    <property type="molecule type" value="Genomic_DNA"/>
</dbReference>
<dbReference type="EMBL" id="Z71522">
    <property type="protein sequence ID" value="CAA96153.1"/>
    <property type="molecule type" value="Genomic_DNA"/>
</dbReference>
<dbReference type="EMBL" id="AY693108">
    <property type="protein sequence ID" value="AAT93127.1"/>
    <property type="molecule type" value="Genomic_DNA"/>
</dbReference>
<dbReference type="EMBL" id="BK006947">
    <property type="protein sequence ID" value="DAA10314.1"/>
    <property type="molecule type" value="Genomic_DNA"/>
</dbReference>
<dbReference type="PIR" id="S63213">
    <property type="entry name" value="S63213"/>
</dbReference>
<dbReference type="RefSeq" id="NP_014154.1">
    <property type="nucleotide sequence ID" value="NM_001183083.1"/>
</dbReference>
<dbReference type="PDB" id="5GMK">
    <property type="method" value="EM"/>
    <property type="resolution" value="3.40 A"/>
    <property type="chains" value="G=1-179"/>
</dbReference>
<dbReference type="PDB" id="5LJ3">
    <property type="method" value="EM"/>
    <property type="resolution" value="3.80 A"/>
    <property type="chains" value="F=1-179"/>
</dbReference>
<dbReference type="PDB" id="5LJ5">
    <property type="method" value="EM"/>
    <property type="resolution" value="3.80 A"/>
    <property type="chains" value="F=1-179"/>
</dbReference>
<dbReference type="PDBsum" id="5GMK"/>
<dbReference type="PDBsum" id="5LJ3"/>
<dbReference type="PDBsum" id="5LJ5"/>
<dbReference type="EMDB" id="EMD-4055"/>
<dbReference type="EMDB" id="EMD-4057"/>
<dbReference type="EMDB" id="EMD-9525"/>
<dbReference type="SMR" id="P53854"/>
<dbReference type="BioGRID" id="35594">
    <property type="interactions" value="405"/>
</dbReference>
<dbReference type="ComplexPortal" id="CPX-1651">
    <property type="entry name" value="PRP19-associated complex"/>
</dbReference>
<dbReference type="DIP" id="DIP-2781N"/>
<dbReference type="FunCoup" id="P53854">
    <property type="interactions" value="86"/>
</dbReference>
<dbReference type="IntAct" id="P53854">
    <property type="interactions" value="27"/>
</dbReference>
<dbReference type="MINT" id="P53854"/>
<dbReference type="STRING" id="4932.YNL245C"/>
<dbReference type="GlyGen" id="P53854">
    <property type="glycosylation" value="2 sites, 1 O-linked glycan (2 sites)"/>
</dbReference>
<dbReference type="iPTMnet" id="P53854"/>
<dbReference type="PaxDb" id="4932-YNL245C"/>
<dbReference type="PeptideAtlas" id="P53854"/>
<dbReference type="TopDownProteomics" id="P53854"/>
<dbReference type="EnsemblFungi" id="YNL245C_mRNA">
    <property type="protein sequence ID" value="YNL245C"/>
    <property type="gene ID" value="YNL245C"/>
</dbReference>
<dbReference type="GeneID" id="855476"/>
<dbReference type="KEGG" id="sce:YNL245C"/>
<dbReference type="AGR" id="SGD:S000005189"/>
<dbReference type="SGD" id="S000005189">
    <property type="gene designation" value="CWC25"/>
</dbReference>
<dbReference type="VEuPathDB" id="FungiDB:YNL245C"/>
<dbReference type="eggNOG" id="KOG3869">
    <property type="taxonomic scope" value="Eukaryota"/>
</dbReference>
<dbReference type="GeneTree" id="ENSGT00440000039055"/>
<dbReference type="HOGENOM" id="CLU_025093_3_1_1"/>
<dbReference type="InParanoid" id="P53854"/>
<dbReference type="OMA" id="VWETEQQ"/>
<dbReference type="OrthoDB" id="21123at2759"/>
<dbReference type="BioCyc" id="YEAST:G3O-33242-MONOMER"/>
<dbReference type="BioGRID-ORCS" id="855476">
    <property type="hits" value="8 hits in 10 CRISPR screens"/>
</dbReference>
<dbReference type="PRO" id="PR:P53854"/>
<dbReference type="Proteomes" id="UP000002311">
    <property type="component" value="Chromosome XIV"/>
</dbReference>
<dbReference type="RNAct" id="P53854">
    <property type="molecule type" value="protein"/>
</dbReference>
<dbReference type="GO" id="GO:0000974">
    <property type="term" value="C:Prp19 complex"/>
    <property type="evidence" value="ECO:0000353"/>
    <property type="project" value="ComplexPortal"/>
</dbReference>
<dbReference type="GO" id="GO:0005684">
    <property type="term" value="C:U2-type spliceosomal complex"/>
    <property type="evidence" value="ECO:0000314"/>
    <property type="project" value="SGD"/>
</dbReference>
<dbReference type="GO" id="GO:0000398">
    <property type="term" value="P:mRNA splicing, via spliceosome"/>
    <property type="evidence" value="ECO:0000314"/>
    <property type="project" value="SGD"/>
</dbReference>
<dbReference type="InterPro" id="IPR019339">
    <property type="entry name" value="CIR_N_dom"/>
</dbReference>
<dbReference type="InterPro" id="IPR022209">
    <property type="entry name" value="CWC25"/>
</dbReference>
<dbReference type="InterPro" id="IPR051376">
    <property type="entry name" value="CWC25_splicing_factor"/>
</dbReference>
<dbReference type="PANTHER" id="PTHR16196">
    <property type="entry name" value="CELL CYCLE CONTROL PROTEIN CWF25"/>
    <property type="match status" value="1"/>
</dbReference>
<dbReference type="PANTHER" id="PTHR16196:SF0">
    <property type="entry name" value="PRE-MRNA-SPLICING FACTOR CWC25 HOMOLOG"/>
    <property type="match status" value="1"/>
</dbReference>
<dbReference type="Pfam" id="PF10197">
    <property type="entry name" value="Cir_N"/>
    <property type="match status" value="1"/>
</dbReference>
<dbReference type="Pfam" id="PF12542">
    <property type="entry name" value="CWC25"/>
    <property type="match status" value="1"/>
</dbReference>
<dbReference type="SMART" id="SM01083">
    <property type="entry name" value="Cir_N"/>
    <property type="match status" value="1"/>
</dbReference>